<protein>
    <recommendedName>
        <fullName evidence="5">Stimulator of interferon genes protein 3</fullName>
        <shortName evidence="4">Sp-STING3</shortName>
    </recommendedName>
</protein>
<proteinExistence type="evidence at protein level"/>
<reference key="1">
    <citation type="journal article" date="2017" name="Sci. Rep.">
        <title>Comparative analysis of the genomes of Stylophora pistillata and Acropora digitifera provides evidence for extensive differences between species of corals.</title>
        <authorList>
            <person name="Voolstra C.R."/>
            <person name="Li Y."/>
            <person name="Liew Y.J."/>
            <person name="Baumgarten S."/>
            <person name="Zoccola D."/>
            <person name="Flot J.F."/>
            <person name="Tambutte S."/>
            <person name="Allemand D."/>
            <person name="Aranda M."/>
        </authorList>
    </citation>
    <scope>NUCLEOTIDE SEQUENCE [LARGE SCALE GENOMIC DNA]</scope>
</reference>
<reference evidence="7" key="2">
    <citation type="journal article" date="2023" name="Cell">
        <title>cGLRs are a diverse family of pattern recognition receptors in innate immunity.</title>
        <authorList>
            <person name="Li Y."/>
            <person name="Slavik K.M."/>
            <person name="Toyoda H.C."/>
            <person name="Morehouse B.R."/>
            <person name="de Oliveira Mann C.C."/>
            <person name="Elek A."/>
            <person name="Levy S."/>
            <person name="Wang Z."/>
            <person name="Mears K.S."/>
            <person name="Liu J."/>
            <person name="Kashin D."/>
            <person name="Guo X."/>
            <person name="Mass T."/>
            <person name="Sebe-Pedros A."/>
            <person name="Schwede F."/>
            <person name="Kranzusch P.J."/>
        </authorList>
    </citation>
    <scope>X-RAY CRYSTALLOGRAPHY (1.73 ANGSTROMS) OF 170-354 IN COMPLEX WITH CGAMP</scope>
</reference>
<feature type="chain" id="PRO_0000460009" description="Stimulator of interferon genes protein 3">
    <location>
        <begin position="1"/>
        <end position="354"/>
    </location>
</feature>
<feature type="transmembrane region" description="Helical" evidence="2">
    <location>
        <begin position="20"/>
        <end position="40"/>
    </location>
</feature>
<feature type="transmembrane region" description="Helical" evidence="2">
    <location>
        <begin position="48"/>
        <end position="68"/>
    </location>
</feature>
<feature type="transmembrane region" description="Helical" evidence="2">
    <location>
        <begin position="101"/>
        <end position="121"/>
    </location>
</feature>
<feature type="transmembrane region" description="Helical" evidence="2">
    <location>
        <begin position="132"/>
        <end position="152"/>
    </location>
</feature>
<feature type="binding site" evidence="3 7">
    <location>
        <position position="178"/>
    </location>
    <ligand>
        <name>3',3'-cGAMP</name>
        <dbReference type="ChEBI" id="CHEBI:71501"/>
    </ligand>
</feature>
<feature type="binding site" evidence="3 7">
    <location>
        <position position="183"/>
    </location>
    <ligand>
        <name>3',3'-cGAMP</name>
        <dbReference type="ChEBI" id="CHEBI:71501"/>
    </ligand>
</feature>
<feature type="binding site" evidence="3 7">
    <location>
        <position position="250"/>
    </location>
    <ligand>
        <name>3',3'-cGAMP</name>
        <dbReference type="ChEBI" id="CHEBI:71501"/>
    </ligand>
</feature>
<feature type="binding site" evidence="3 7">
    <location>
        <position position="251"/>
    </location>
    <ligand>
        <name>3',3'-cGAMP</name>
        <dbReference type="ChEBI" id="CHEBI:71501"/>
    </ligand>
</feature>
<feature type="binding site" evidence="3 7">
    <location>
        <position position="253"/>
    </location>
    <ligand>
        <name>3',3'-cGAMP</name>
        <dbReference type="ChEBI" id="CHEBI:71501"/>
    </ligand>
</feature>
<feature type="binding site" evidence="3 7">
    <location>
        <position position="272"/>
    </location>
    <ligand>
        <name>3',3'-cGAMP</name>
        <dbReference type="ChEBI" id="CHEBI:71501"/>
    </ligand>
</feature>
<feature type="binding site" evidence="3 7">
    <location>
        <position position="275"/>
    </location>
    <ligand>
        <name>3',3'-cGAMP</name>
        <dbReference type="ChEBI" id="CHEBI:71501"/>
    </ligand>
</feature>
<feature type="binding site" evidence="3 7">
    <location>
        <position position="276"/>
    </location>
    <ligand>
        <name>3',3'-cGAMP</name>
        <dbReference type="ChEBI" id="CHEBI:71501"/>
    </ligand>
</feature>
<feature type="helix" evidence="8">
    <location>
        <begin position="171"/>
        <end position="182"/>
    </location>
</feature>
<feature type="helix" evidence="8">
    <location>
        <begin position="184"/>
        <end position="197"/>
    </location>
</feature>
<feature type="turn" evidence="8">
    <location>
        <begin position="199"/>
        <end position="204"/>
    </location>
</feature>
<feature type="strand" evidence="8">
    <location>
        <begin position="210"/>
        <end position="215"/>
    </location>
</feature>
<feature type="helix" evidence="8">
    <location>
        <begin position="224"/>
        <end position="226"/>
    </location>
</feature>
<feature type="strand" evidence="8">
    <location>
        <begin position="231"/>
        <end position="236"/>
    </location>
</feature>
<feature type="strand" evidence="8">
    <location>
        <begin position="240"/>
        <end position="244"/>
    </location>
</feature>
<feature type="strand" evidence="8">
    <location>
        <begin position="247"/>
        <end position="252"/>
    </location>
</feature>
<feature type="strand" evidence="8">
    <location>
        <begin position="255"/>
        <end position="260"/>
    </location>
</feature>
<feature type="strand" evidence="8">
    <location>
        <begin position="266"/>
        <end position="273"/>
    </location>
</feature>
<feature type="helix" evidence="8">
    <location>
        <begin position="277"/>
        <end position="285"/>
    </location>
</feature>
<feature type="helix" evidence="8">
    <location>
        <begin position="293"/>
        <end position="312"/>
    </location>
</feature>
<feature type="helix" evidence="8">
    <location>
        <begin position="315"/>
        <end position="318"/>
    </location>
</feature>
<feature type="strand" evidence="8">
    <location>
        <begin position="321"/>
        <end position="326"/>
    </location>
</feature>
<feature type="helix" evidence="8">
    <location>
        <begin position="328"/>
        <end position="333"/>
    </location>
</feature>
<feature type="helix" evidence="8">
    <location>
        <begin position="334"/>
        <end position="342"/>
    </location>
</feature>
<organism>
    <name type="scientific">Stylophora pistillata</name>
    <name type="common">Smooth cauliflower coral</name>
    <dbReference type="NCBI Taxonomy" id="50429"/>
    <lineage>
        <taxon>Eukaryota</taxon>
        <taxon>Metazoa</taxon>
        <taxon>Cnidaria</taxon>
        <taxon>Anthozoa</taxon>
        <taxon>Hexacorallia</taxon>
        <taxon>Scleractinia</taxon>
        <taxon>Astrocoeniina</taxon>
        <taxon>Pocilloporidae</taxon>
        <taxon>Stylophora</taxon>
    </lineage>
</organism>
<dbReference type="EMBL" id="LSMT01000069">
    <property type="protein sequence ID" value="PFX29184.1"/>
    <property type="molecule type" value="Genomic_DNA"/>
</dbReference>
<dbReference type="PDB" id="8EFN">
    <property type="method" value="X-ray"/>
    <property type="resolution" value="1.73 A"/>
    <property type="chains" value="A/D=170-354"/>
</dbReference>
<dbReference type="PDBsum" id="8EFN"/>
<dbReference type="SMR" id="A0A2B4SES9"/>
<dbReference type="STRING" id="50429.A0A2B4SES9"/>
<dbReference type="EnsemblMetazoa" id="XM_022928968.1">
    <property type="protein sequence ID" value="XP_022784703.1"/>
    <property type="gene ID" value="LOC111325205"/>
</dbReference>
<dbReference type="OrthoDB" id="6053839at2759"/>
<dbReference type="Proteomes" id="UP000225706">
    <property type="component" value="Unassembled WGS sequence"/>
</dbReference>
<dbReference type="GO" id="GO:0005776">
    <property type="term" value="C:autophagosome"/>
    <property type="evidence" value="ECO:0007669"/>
    <property type="project" value="TreeGrafter"/>
</dbReference>
<dbReference type="GO" id="GO:0005789">
    <property type="term" value="C:endoplasmic reticulum membrane"/>
    <property type="evidence" value="ECO:0007669"/>
    <property type="project" value="TreeGrafter"/>
</dbReference>
<dbReference type="GO" id="GO:0061507">
    <property type="term" value="F:2',3'-cyclic GMP-AMP binding"/>
    <property type="evidence" value="ECO:0007669"/>
    <property type="project" value="TreeGrafter"/>
</dbReference>
<dbReference type="GO" id="GO:0140703">
    <property type="term" value="F:3',3'-cyclic GMP-AMP binding"/>
    <property type="evidence" value="ECO:0000314"/>
    <property type="project" value="UniProtKB"/>
</dbReference>
<dbReference type="GO" id="GO:0180001">
    <property type="term" value="F:cyclic-di-AMP binding"/>
    <property type="evidence" value="ECO:0000314"/>
    <property type="project" value="UniProtKB"/>
</dbReference>
<dbReference type="GO" id="GO:0035438">
    <property type="term" value="F:cyclic-di-GMP binding"/>
    <property type="evidence" value="ECO:0000314"/>
    <property type="project" value="UniProtKB"/>
</dbReference>
<dbReference type="GO" id="GO:0002218">
    <property type="term" value="P:activation of innate immune response"/>
    <property type="evidence" value="ECO:0007669"/>
    <property type="project" value="InterPro"/>
</dbReference>
<dbReference type="GO" id="GO:0000045">
    <property type="term" value="P:autophagosome assembly"/>
    <property type="evidence" value="ECO:0007669"/>
    <property type="project" value="TreeGrafter"/>
</dbReference>
<dbReference type="GO" id="GO:0045087">
    <property type="term" value="P:innate immune response"/>
    <property type="evidence" value="ECO:0007669"/>
    <property type="project" value="UniProtKB-KW"/>
</dbReference>
<dbReference type="GO" id="GO:0016239">
    <property type="term" value="P:positive regulation of macroautophagy"/>
    <property type="evidence" value="ECO:0007669"/>
    <property type="project" value="TreeGrafter"/>
</dbReference>
<dbReference type="GO" id="GO:0032481">
    <property type="term" value="P:positive regulation of type I interferon production"/>
    <property type="evidence" value="ECO:0007669"/>
    <property type="project" value="InterPro"/>
</dbReference>
<dbReference type="GO" id="GO:0061709">
    <property type="term" value="P:reticulophagy"/>
    <property type="evidence" value="ECO:0007669"/>
    <property type="project" value="TreeGrafter"/>
</dbReference>
<dbReference type="Gene3D" id="1.20.5.5200">
    <property type="match status" value="1"/>
</dbReference>
<dbReference type="Gene3D" id="3.40.50.12100">
    <property type="entry name" value="Stimulator of interferon genes protein"/>
    <property type="match status" value="1"/>
</dbReference>
<dbReference type="InterPro" id="IPR029158">
    <property type="entry name" value="STING"/>
</dbReference>
<dbReference type="InterPro" id="IPR038623">
    <property type="entry name" value="STING_C_sf"/>
</dbReference>
<dbReference type="InterPro" id="IPR055432">
    <property type="entry name" value="STING_LBD"/>
</dbReference>
<dbReference type="InterPro" id="IPR055434">
    <property type="entry name" value="STING_TM"/>
</dbReference>
<dbReference type="PANTHER" id="PTHR34339">
    <property type="entry name" value="STIMULATOR OF INTERFERON GENES PROTEIN"/>
    <property type="match status" value="1"/>
</dbReference>
<dbReference type="PANTHER" id="PTHR34339:SF1">
    <property type="entry name" value="STIMULATOR OF INTERFERON GENES PROTEIN"/>
    <property type="match status" value="1"/>
</dbReference>
<dbReference type="Pfam" id="PF15009">
    <property type="entry name" value="STING_LBD"/>
    <property type="match status" value="1"/>
</dbReference>
<dbReference type="Pfam" id="PF23417">
    <property type="entry name" value="STING_TM"/>
    <property type="match status" value="1"/>
</dbReference>
<accession>A0A2B4SES9</accession>
<name>STNG3_STYPI</name>
<gene>
    <name evidence="4" type="primary">STING3</name>
    <name evidence="6" type="ORF">AWC38_SpisGene6026</name>
</gene>
<sequence length="354" mass="40624">MDQQENNGFGPIFKPRGKAVTFASVVIAIISGALLVFALWESEDKDGINFVFFATALLMLSVIIGELIRRVSMLAEEIRHKQTRYQGEWRRVFRSTFAFEYGSCILAVGTTSVLFVCYALLQNYEAFFRLDYGIFFILNCFVIPQLVFIVGIREPNTVEATMLNERNNKNVADGFAWNYYFGYLKLVLPRLEAQIAKSSEFRYKITKKKLYILVPKTCYVYDNIADADPRVTWAGDLTPCKINRGGIKERIYKQAVYRVAMTDKHEYFFILEYASNLMSLYDMSLHEDAPLSRQERDDQVVLFIRKLREILEGCKECRGKCEIVPISGDEKSKIADVLVAIHNATQVESDEADL</sequence>
<keyword id="KW-0002">3D-structure</keyword>
<keyword id="KW-0391">Immunity</keyword>
<keyword id="KW-0399">Innate immunity</keyword>
<keyword id="KW-0472">Membrane</keyword>
<keyword id="KW-1185">Reference proteome</keyword>
<keyword id="KW-0812">Transmembrane</keyword>
<keyword id="KW-1133">Transmembrane helix</keyword>
<comment type="function">
    <text evidence="1 3">Facilitator of innate immune signaling that acts as a sensor of second messenger signals produced by cyclic GMP-AMP synthase-like receptors (cGLRs) and promotes the production of type I interferon (PubMed:37379839). Innate immune response is triggered in response to nucleotides from viruses and bacteria delivered to the cytoplasm (PubMed:37379839). Acts by binding cyclic dinucleotides: recognizes and binds cyclic 3'-3' linked cGAMP (3'-3'-cGAMP), cyclic di-AMP (3',3'-c-di-AMP) and cyclic di-GMP (3',3'-c-di-GMP) second messengers produced by cGLRs in response to nucleotides in the cytosol, such as double-stranded RNA (dsRNA) (PubMed:37379839). Upon binding to 3'-3'-cGAMP, 3',3'-c-di-AMP or 3',3'-c-di-GMP, oligomerizes and promotes the recruitment and subsequent activation of the transcription factor IRF3 to induce expression of type I interferon (By similarity).</text>
</comment>
<comment type="subcellular location">
    <subcellularLocation>
        <location evidence="2">Membrane</location>
        <topology evidence="2">Multi-pass membrane protein</topology>
    </subcellularLocation>
</comment>
<comment type="similarity">
    <text evidence="5">Belongs to the STING family.</text>
</comment>
<evidence type="ECO:0000250" key="1">
    <source>
        <dbReference type="UniProtKB" id="Q86WV6"/>
    </source>
</evidence>
<evidence type="ECO:0000255" key="2"/>
<evidence type="ECO:0000269" key="3">
    <source>
    </source>
</evidence>
<evidence type="ECO:0000303" key="4">
    <source>
    </source>
</evidence>
<evidence type="ECO:0000305" key="5"/>
<evidence type="ECO:0000312" key="6">
    <source>
        <dbReference type="EMBL" id="PFX29184.1"/>
    </source>
</evidence>
<evidence type="ECO:0007744" key="7">
    <source>
        <dbReference type="PDB" id="8EFN"/>
    </source>
</evidence>
<evidence type="ECO:0007829" key="8">
    <source>
        <dbReference type="PDB" id="8EFN"/>
    </source>
</evidence>